<keyword id="KW-0004">4Fe-4S</keyword>
<keyword id="KW-0408">Iron</keyword>
<keyword id="KW-0411">Iron-sulfur</keyword>
<keyword id="KW-0456">Lyase</keyword>
<keyword id="KW-0479">Metal-binding</keyword>
<keyword id="KW-0949">S-adenosyl-L-methionine</keyword>
<keyword id="KW-0784">Thiamine biosynthesis</keyword>
<keyword id="KW-0862">Zinc</keyword>
<feature type="chain" id="PRO_0000242270" description="Phosphomethylpyrimidine synthase">
    <location>
        <begin position="1"/>
        <end position="613"/>
    </location>
</feature>
<feature type="binding site" evidence="1">
    <location>
        <position position="215"/>
    </location>
    <ligand>
        <name>substrate</name>
    </ligand>
</feature>
<feature type="binding site" evidence="1">
    <location>
        <position position="244"/>
    </location>
    <ligand>
        <name>substrate</name>
    </ligand>
</feature>
<feature type="binding site" evidence="1">
    <location>
        <position position="273"/>
    </location>
    <ligand>
        <name>substrate</name>
    </ligand>
</feature>
<feature type="binding site" evidence="1">
    <location>
        <position position="309"/>
    </location>
    <ligand>
        <name>substrate</name>
    </ligand>
</feature>
<feature type="binding site" evidence="1">
    <location>
        <begin position="329"/>
        <end position="331"/>
    </location>
    <ligand>
        <name>substrate</name>
    </ligand>
</feature>
<feature type="binding site" evidence="1">
    <location>
        <begin position="370"/>
        <end position="373"/>
    </location>
    <ligand>
        <name>substrate</name>
    </ligand>
</feature>
<feature type="binding site" evidence="1">
    <location>
        <position position="409"/>
    </location>
    <ligand>
        <name>substrate</name>
    </ligand>
</feature>
<feature type="binding site" evidence="1">
    <location>
        <position position="413"/>
    </location>
    <ligand>
        <name>Zn(2+)</name>
        <dbReference type="ChEBI" id="CHEBI:29105"/>
    </ligand>
</feature>
<feature type="binding site" evidence="1">
    <location>
        <position position="436"/>
    </location>
    <ligand>
        <name>substrate</name>
    </ligand>
</feature>
<feature type="binding site" evidence="1">
    <location>
        <position position="477"/>
    </location>
    <ligand>
        <name>Zn(2+)</name>
        <dbReference type="ChEBI" id="CHEBI:29105"/>
    </ligand>
</feature>
<feature type="binding site" evidence="1">
    <location>
        <position position="557"/>
    </location>
    <ligand>
        <name>[4Fe-4S] cluster</name>
        <dbReference type="ChEBI" id="CHEBI:49883"/>
        <note>4Fe-4S-S-AdoMet</note>
    </ligand>
</feature>
<feature type="binding site" evidence="1">
    <location>
        <position position="560"/>
    </location>
    <ligand>
        <name>[4Fe-4S] cluster</name>
        <dbReference type="ChEBI" id="CHEBI:49883"/>
        <note>4Fe-4S-S-AdoMet</note>
    </ligand>
</feature>
<feature type="binding site" evidence="1">
    <location>
        <position position="565"/>
    </location>
    <ligand>
        <name>[4Fe-4S] cluster</name>
        <dbReference type="ChEBI" id="CHEBI:49883"/>
        <note>4Fe-4S-S-AdoMet</note>
    </ligand>
</feature>
<gene>
    <name evidence="1" type="primary">thiC</name>
    <name type="ordered locus">amb0221</name>
</gene>
<proteinExistence type="inferred from homology"/>
<reference key="1">
    <citation type="journal article" date="2005" name="DNA Res.">
        <title>Complete genome sequence of the facultative anaerobic magnetotactic bacterium Magnetospirillum sp. strain AMB-1.</title>
        <authorList>
            <person name="Matsunaga T."/>
            <person name="Okamura Y."/>
            <person name="Fukuda Y."/>
            <person name="Wahyudi A.T."/>
            <person name="Murase Y."/>
            <person name="Takeyama H."/>
        </authorList>
    </citation>
    <scope>NUCLEOTIDE SEQUENCE [LARGE SCALE GENOMIC DNA]</scope>
    <source>
        <strain>ATCC 700264 / AMB-1</strain>
    </source>
</reference>
<dbReference type="EC" id="4.1.99.17" evidence="1"/>
<dbReference type="EMBL" id="AP007255">
    <property type="protein sequence ID" value="BAE49025.1"/>
    <property type="status" value="ALT_INIT"/>
    <property type="molecule type" value="Genomic_DNA"/>
</dbReference>
<dbReference type="RefSeq" id="WP_043743084.1">
    <property type="nucleotide sequence ID" value="NC_007626.1"/>
</dbReference>
<dbReference type="SMR" id="Q2WAV0"/>
<dbReference type="STRING" id="342108.amb0221"/>
<dbReference type="KEGG" id="mag:amb0221"/>
<dbReference type="HOGENOM" id="CLU_013181_2_1_5"/>
<dbReference type="OrthoDB" id="9805897at2"/>
<dbReference type="UniPathway" id="UPA00060"/>
<dbReference type="Proteomes" id="UP000007058">
    <property type="component" value="Chromosome"/>
</dbReference>
<dbReference type="GO" id="GO:0005829">
    <property type="term" value="C:cytosol"/>
    <property type="evidence" value="ECO:0007669"/>
    <property type="project" value="TreeGrafter"/>
</dbReference>
<dbReference type="GO" id="GO:0051539">
    <property type="term" value="F:4 iron, 4 sulfur cluster binding"/>
    <property type="evidence" value="ECO:0007669"/>
    <property type="project" value="UniProtKB-KW"/>
</dbReference>
<dbReference type="GO" id="GO:0016830">
    <property type="term" value="F:carbon-carbon lyase activity"/>
    <property type="evidence" value="ECO:0007669"/>
    <property type="project" value="InterPro"/>
</dbReference>
<dbReference type="GO" id="GO:0008270">
    <property type="term" value="F:zinc ion binding"/>
    <property type="evidence" value="ECO:0007669"/>
    <property type="project" value="UniProtKB-UniRule"/>
</dbReference>
<dbReference type="GO" id="GO:0009228">
    <property type="term" value="P:thiamine biosynthetic process"/>
    <property type="evidence" value="ECO:0007669"/>
    <property type="project" value="UniProtKB-KW"/>
</dbReference>
<dbReference type="GO" id="GO:0009229">
    <property type="term" value="P:thiamine diphosphate biosynthetic process"/>
    <property type="evidence" value="ECO:0007669"/>
    <property type="project" value="UniProtKB-UniRule"/>
</dbReference>
<dbReference type="FunFam" id="3.20.20.540:FF:000001">
    <property type="entry name" value="Phosphomethylpyrimidine synthase"/>
    <property type="match status" value="1"/>
</dbReference>
<dbReference type="Gene3D" id="6.10.250.620">
    <property type="match status" value="1"/>
</dbReference>
<dbReference type="Gene3D" id="3.20.20.540">
    <property type="entry name" value="Radical SAM ThiC family, central domain"/>
    <property type="match status" value="1"/>
</dbReference>
<dbReference type="HAMAP" id="MF_00089">
    <property type="entry name" value="ThiC"/>
    <property type="match status" value="1"/>
</dbReference>
<dbReference type="InterPro" id="IPR037509">
    <property type="entry name" value="ThiC"/>
</dbReference>
<dbReference type="InterPro" id="IPR025747">
    <property type="entry name" value="ThiC-associated_dom"/>
</dbReference>
<dbReference type="InterPro" id="IPR038521">
    <property type="entry name" value="ThiC/Bza_core_dom"/>
</dbReference>
<dbReference type="InterPro" id="IPR002817">
    <property type="entry name" value="ThiC/BzaA/B"/>
</dbReference>
<dbReference type="NCBIfam" id="NF006763">
    <property type="entry name" value="PRK09284.1"/>
    <property type="match status" value="1"/>
</dbReference>
<dbReference type="NCBIfam" id="NF009895">
    <property type="entry name" value="PRK13352.1"/>
    <property type="match status" value="1"/>
</dbReference>
<dbReference type="NCBIfam" id="TIGR00190">
    <property type="entry name" value="thiC"/>
    <property type="match status" value="1"/>
</dbReference>
<dbReference type="PANTHER" id="PTHR30557:SF1">
    <property type="entry name" value="PHOSPHOMETHYLPYRIMIDINE SYNTHASE, CHLOROPLASTIC"/>
    <property type="match status" value="1"/>
</dbReference>
<dbReference type="PANTHER" id="PTHR30557">
    <property type="entry name" value="THIAMINE BIOSYNTHESIS PROTEIN THIC"/>
    <property type="match status" value="1"/>
</dbReference>
<dbReference type="Pfam" id="PF13667">
    <property type="entry name" value="ThiC-associated"/>
    <property type="match status" value="1"/>
</dbReference>
<dbReference type="Pfam" id="PF01964">
    <property type="entry name" value="ThiC_Rad_SAM"/>
    <property type="match status" value="1"/>
</dbReference>
<dbReference type="SFLD" id="SFLDF00407">
    <property type="entry name" value="phosphomethylpyrimidine_syntha"/>
    <property type="match status" value="1"/>
</dbReference>
<dbReference type="SFLD" id="SFLDG01114">
    <property type="entry name" value="phosphomethylpyrimidine_syntha"/>
    <property type="match status" value="1"/>
</dbReference>
<dbReference type="SFLD" id="SFLDS00113">
    <property type="entry name" value="Radical_SAM_Phosphomethylpyrim"/>
    <property type="match status" value="1"/>
</dbReference>
<organism>
    <name type="scientific">Paramagnetospirillum magneticum (strain ATCC 700264 / AMB-1)</name>
    <name type="common">Magnetospirillum magneticum</name>
    <dbReference type="NCBI Taxonomy" id="342108"/>
    <lineage>
        <taxon>Bacteria</taxon>
        <taxon>Pseudomonadati</taxon>
        <taxon>Pseudomonadota</taxon>
        <taxon>Alphaproteobacteria</taxon>
        <taxon>Rhodospirillales</taxon>
        <taxon>Magnetospirillaceae</taxon>
        <taxon>Paramagnetospirillum</taxon>
    </lineage>
</organism>
<comment type="function">
    <text evidence="1">Catalyzes the synthesis of the hydroxymethylpyrimidine phosphate (HMP-P) moiety of thiamine from aminoimidazole ribotide (AIR) in a radical S-adenosyl-L-methionine (SAM)-dependent reaction.</text>
</comment>
<comment type="catalytic activity">
    <reaction evidence="1">
        <text>5-amino-1-(5-phospho-beta-D-ribosyl)imidazole + S-adenosyl-L-methionine = 4-amino-2-methyl-5-(phosphooxymethyl)pyrimidine + CO + 5'-deoxyadenosine + formate + L-methionine + 3 H(+)</text>
        <dbReference type="Rhea" id="RHEA:24840"/>
        <dbReference type="ChEBI" id="CHEBI:15378"/>
        <dbReference type="ChEBI" id="CHEBI:15740"/>
        <dbReference type="ChEBI" id="CHEBI:17245"/>
        <dbReference type="ChEBI" id="CHEBI:17319"/>
        <dbReference type="ChEBI" id="CHEBI:57844"/>
        <dbReference type="ChEBI" id="CHEBI:58354"/>
        <dbReference type="ChEBI" id="CHEBI:59789"/>
        <dbReference type="ChEBI" id="CHEBI:137981"/>
        <dbReference type="EC" id="4.1.99.17"/>
    </reaction>
</comment>
<comment type="cofactor">
    <cofactor evidence="1">
        <name>[4Fe-4S] cluster</name>
        <dbReference type="ChEBI" id="CHEBI:49883"/>
    </cofactor>
    <text evidence="1">Binds 1 [4Fe-4S] cluster per subunit. The cluster is coordinated with 3 cysteines and an exchangeable S-adenosyl-L-methionine.</text>
</comment>
<comment type="pathway">
    <text evidence="1">Cofactor biosynthesis; thiamine diphosphate biosynthesis.</text>
</comment>
<comment type="subunit">
    <text evidence="1">Homodimer.</text>
</comment>
<comment type="similarity">
    <text evidence="1">Belongs to the ThiC family.</text>
</comment>
<comment type="sequence caution" evidence="2">
    <conflict type="erroneous initiation">
        <sequence resource="EMBL-CDS" id="BAE49025"/>
    </conflict>
</comment>
<name>THIC_PARM1</name>
<sequence length="613" mass="67463">MSETTLKITTGPLPGSRKIYVEGSRPDVRVAMREIDLTPGSGEAPVRVYDCSGPYTDPSMQVDITKGVPRLREQWILERGDVEHYEGRAHKPEDDGLKPGETIGVPVFDRAGAGLRPLRAKPGKAPTQLAYARAGIITPEMEYVAIRENMKRAEMKAAVVRDGEDFGADIPDEVTPEFVRAEIARGRAVLPANVNHPEAEPMIIGRNFLTKINANIGNSAVASSVDEEVEKMVWATRWGADTVMDLSTGRHIHATREWIIRNSPVPIGTVPIYQALEKVDGKAEDLTWEIFRDTLIEQAEQGVDYFTIHAGVLLRYIPLTAKRTTGIVSRGGSIMAKWCLAHHKENFLYTHFEEICELLKAYDVGFSLGDGLRPGSIADANDAAQFGELETLGELTHKAWAHDCQVIIEGPGHVPMHKIKKNVEKQIELCGEAPFYTLGPLVTDIAPGYDHITSAIGAAMIGWFGTAMLCYVTPKEHLGLPDKQDVREGVVTYKLAAHAADLAKGHPGAQVRDNALSRARFEFRWKDQFNLSLDPEKALAFHDQHLPAEGAKLAHFCSMCGPKFCSMKISQEVRDFAAAEQGMAEMSEKFVNDGAEIYHTEPAQAQQAKPAAE</sequence>
<evidence type="ECO:0000255" key="1">
    <source>
        <dbReference type="HAMAP-Rule" id="MF_00089"/>
    </source>
</evidence>
<evidence type="ECO:0000305" key="2"/>
<accession>Q2WAV0</accession>
<protein>
    <recommendedName>
        <fullName evidence="1">Phosphomethylpyrimidine synthase</fullName>
        <ecNumber evidence="1">4.1.99.17</ecNumber>
    </recommendedName>
    <alternativeName>
        <fullName evidence="1">Hydroxymethylpyrimidine phosphate synthase</fullName>
        <shortName evidence="1">HMP-P synthase</shortName>
        <shortName evidence="1">HMP-phosphate synthase</shortName>
        <shortName evidence="1">HMPP synthase</shortName>
    </alternativeName>
    <alternativeName>
        <fullName evidence="1">Thiamine biosynthesis protein ThiC</fullName>
    </alternativeName>
</protein>